<reference key="1">
    <citation type="journal article" date="2008" name="PLoS ONE">
        <title>Genetic basis of virulence attenuation revealed by comparative genomic analysis of Mycobacterium tuberculosis strain H37Ra versus H37Rv.</title>
        <authorList>
            <person name="Zheng H."/>
            <person name="Lu L."/>
            <person name="Wang B."/>
            <person name="Pu S."/>
            <person name="Zhang X."/>
            <person name="Zhu G."/>
            <person name="Shi W."/>
            <person name="Zhang L."/>
            <person name="Wang H."/>
            <person name="Wang S."/>
            <person name="Zhao G."/>
            <person name="Zhang Y."/>
        </authorList>
    </citation>
    <scope>NUCLEOTIDE SEQUENCE [LARGE SCALE GENOMIC DNA]</scope>
    <source>
        <strain>ATCC 25177 / H37Ra</strain>
    </source>
</reference>
<sequence length="179" mass="18892">MAGPDRAELAELVRRLSVVHGRVTLSSGREADYYVDLRRATLHHRASALIGRLMRELTADWDYSVVGGLTLGADPVATAIMHAPGRPIDAFVVRKSAKAHGMQRLIEGSEVTGQRVLVVEDTSTTGNSALTAVHAVQDVGGEVVGVATVVDRATGAAEAIEAEGLRYRSVLGLADLGLD</sequence>
<comment type="function">
    <text evidence="1">Catalyzes the transfer of a ribosyl phosphate group from 5-phosphoribose 1-diphosphate to orotate, leading to the formation of orotidine monophosphate (OMP).</text>
</comment>
<comment type="catalytic activity">
    <reaction evidence="1">
        <text>orotidine 5'-phosphate + diphosphate = orotate + 5-phospho-alpha-D-ribose 1-diphosphate</text>
        <dbReference type="Rhea" id="RHEA:10380"/>
        <dbReference type="ChEBI" id="CHEBI:30839"/>
        <dbReference type="ChEBI" id="CHEBI:33019"/>
        <dbReference type="ChEBI" id="CHEBI:57538"/>
        <dbReference type="ChEBI" id="CHEBI:58017"/>
        <dbReference type="EC" id="2.4.2.10"/>
    </reaction>
</comment>
<comment type="cofactor">
    <cofactor evidence="1">
        <name>Mg(2+)</name>
        <dbReference type="ChEBI" id="CHEBI:18420"/>
    </cofactor>
</comment>
<comment type="pathway">
    <text evidence="1">Pyrimidine metabolism; UMP biosynthesis via de novo pathway; UMP from orotate: step 1/2.</text>
</comment>
<comment type="subunit">
    <text evidence="1">Homodimer.</text>
</comment>
<comment type="similarity">
    <text evidence="1">Belongs to the purine/pyrimidine phosphoribosyltransferase family. PyrE subfamily.</text>
</comment>
<name>PYRE_MYCTA</name>
<gene>
    <name evidence="1" type="primary">pyrE</name>
    <name type="ordered locus">MRA_0390</name>
</gene>
<proteinExistence type="inferred from homology"/>
<protein>
    <recommendedName>
        <fullName evidence="1">Orotate phosphoribosyltransferase</fullName>
        <shortName evidence="1">OPRT</shortName>
        <shortName evidence="1">OPRTase</shortName>
        <ecNumber evidence="1">2.4.2.10</ecNumber>
    </recommendedName>
</protein>
<keyword id="KW-0328">Glycosyltransferase</keyword>
<keyword id="KW-0460">Magnesium</keyword>
<keyword id="KW-0665">Pyrimidine biosynthesis</keyword>
<keyword id="KW-1185">Reference proteome</keyword>
<keyword id="KW-0808">Transferase</keyword>
<organism>
    <name type="scientific">Mycobacterium tuberculosis (strain ATCC 25177 / H37Ra)</name>
    <dbReference type="NCBI Taxonomy" id="419947"/>
    <lineage>
        <taxon>Bacteria</taxon>
        <taxon>Bacillati</taxon>
        <taxon>Actinomycetota</taxon>
        <taxon>Actinomycetes</taxon>
        <taxon>Mycobacteriales</taxon>
        <taxon>Mycobacteriaceae</taxon>
        <taxon>Mycobacterium</taxon>
        <taxon>Mycobacterium tuberculosis complex</taxon>
    </lineage>
</organism>
<feature type="chain" id="PRO_1000066258" description="Orotate phosphoribosyltransferase">
    <location>
        <begin position="1"/>
        <end position="179"/>
    </location>
</feature>
<feature type="binding site" evidence="1">
    <location>
        <position position="94"/>
    </location>
    <ligand>
        <name>5-phospho-alpha-D-ribose 1-diphosphate</name>
        <dbReference type="ChEBI" id="CHEBI:58017"/>
        <note>ligand shared between dimeric partners</note>
    </ligand>
</feature>
<feature type="binding site" description="in other chain" evidence="1">
    <location>
        <position position="95"/>
    </location>
    <ligand>
        <name>5-phospho-alpha-D-ribose 1-diphosphate</name>
        <dbReference type="ChEBI" id="CHEBI:58017"/>
        <note>ligand shared between dimeric partners</note>
    </ligand>
</feature>
<feature type="binding site" evidence="1">
    <location>
        <position position="98"/>
    </location>
    <ligand>
        <name>5-phospho-alpha-D-ribose 1-diphosphate</name>
        <dbReference type="ChEBI" id="CHEBI:58017"/>
        <note>ligand shared between dimeric partners</note>
    </ligand>
</feature>
<feature type="binding site" evidence="1">
    <location>
        <position position="100"/>
    </location>
    <ligand>
        <name>5-phospho-alpha-D-ribose 1-diphosphate</name>
        <dbReference type="ChEBI" id="CHEBI:58017"/>
        <note>ligand shared between dimeric partners</note>
    </ligand>
</feature>
<feature type="binding site" description="in other chain" evidence="1">
    <location>
        <begin position="120"/>
        <end position="128"/>
    </location>
    <ligand>
        <name>5-phospho-alpha-D-ribose 1-diphosphate</name>
        <dbReference type="ChEBI" id="CHEBI:58017"/>
        <note>ligand shared between dimeric partners</note>
    </ligand>
</feature>
<feature type="binding site" evidence="1">
    <location>
        <position position="124"/>
    </location>
    <ligand>
        <name>orotate</name>
        <dbReference type="ChEBI" id="CHEBI:30839"/>
    </ligand>
</feature>
<feature type="binding site" evidence="1">
    <location>
        <position position="152"/>
    </location>
    <ligand>
        <name>orotate</name>
        <dbReference type="ChEBI" id="CHEBI:30839"/>
    </ligand>
</feature>
<evidence type="ECO:0000255" key="1">
    <source>
        <dbReference type="HAMAP-Rule" id="MF_01208"/>
    </source>
</evidence>
<accession>A5TZA9</accession>
<dbReference type="EC" id="2.4.2.10" evidence="1"/>
<dbReference type="EMBL" id="CP000611">
    <property type="protein sequence ID" value="ABQ72109.1"/>
    <property type="molecule type" value="Genomic_DNA"/>
</dbReference>
<dbReference type="RefSeq" id="WP_003401894.1">
    <property type="nucleotide sequence ID" value="NZ_CP016972.1"/>
</dbReference>
<dbReference type="SMR" id="A5TZA9"/>
<dbReference type="GeneID" id="45424348"/>
<dbReference type="KEGG" id="mra:MRA_0390"/>
<dbReference type="eggNOG" id="COG0461">
    <property type="taxonomic scope" value="Bacteria"/>
</dbReference>
<dbReference type="HOGENOM" id="CLU_074878_2_1_11"/>
<dbReference type="UniPathway" id="UPA00070">
    <property type="reaction ID" value="UER00119"/>
</dbReference>
<dbReference type="Proteomes" id="UP000001988">
    <property type="component" value="Chromosome"/>
</dbReference>
<dbReference type="GO" id="GO:0000287">
    <property type="term" value="F:magnesium ion binding"/>
    <property type="evidence" value="ECO:0007669"/>
    <property type="project" value="UniProtKB-UniRule"/>
</dbReference>
<dbReference type="GO" id="GO:0004588">
    <property type="term" value="F:orotate phosphoribosyltransferase activity"/>
    <property type="evidence" value="ECO:0007669"/>
    <property type="project" value="UniProtKB-UniRule"/>
</dbReference>
<dbReference type="GO" id="GO:0044205">
    <property type="term" value="P:'de novo' UMP biosynthetic process"/>
    <property type="evidence" value="ECO:0007669"/>
    <property type="project" value="UniProtKB-UniRule"/>
</dbReference>
<dbReference type="GO" id="GO:0019856">
    <property type="term" value="P:pyrimidine nucleobase biosynthetic process"/>
    <property type="evidence" value="ECO:0007669"/>
    <property type="project" value="TreeGrafter"/>
</dbReference>
<dbReference type="CDD" id="cd06223">
    <property type="entry name" value="PRTases_typeI"/>
    <property type="match status" value="1"/>
</dbReference>
<dbReference type="FunFam" id="3.40.50.2020:FF:000029">
    <property type="entry name" value="Orotate phosphoribosyltransferase"/>
    <property type="match status" value="1"/>
</dbReference>
<dbReference type="Gene3D" id="3.40.50.2020">
    <property type="match status" value="1"/>
</dbReference>
<dbReference type="HAMAP" id="MF_01208">
    <property type="entry name" value="PyrE"/>
    <property type="match status" value="1"/>
</dbReference>
<dbReference type="InterPro" id="IPR023031">
    <property type="entry name" value="OPRT"/>
</dbReference>
<dbReference type="InterPro" id="IPR004467">
    <property type="entry name" value="Or_phspho_trans_dom"/>
</dbReference>
<dbReference type="InterPro" id="IPR000836">
    <property type="entry name" value="PRibTrfase_dom"/>
</dbReference>
<dbReference type="InterPro" id="IPR029057">
    <property type="entry name" value="PRTase-like"/>
</dbReference>
<dbReference type="NCBIfam" id="TIGR00336">
    <property type="entry name" value="pyrE"/>
    <property type="match status" value="1"/>
</dbReference>
<dbReference type="PANTHER" id="PTHR19278">
    <property type="entry name" value="OROTATE PHOSPHORIBOSYLTRANSFERASE"/>
    <property type="match status" value="1"/>
</dbReference>
<dbReference type="PANTHER" id="PTHR19278:SF9">
    <property type="entry name" value="URIDINE 5'-MONOPHOSPHATE SYNTHASE"/>
    <property type="match status" value="1"/>
</dbReference>
<dbReference type="Pfam" id="PF00156">
    <property type="entry name" value="Pribosyltran"/>
    <property type="match status" value="1"/>
</dbReference>
<dbReference type="SUPFAM" id="SSF53271">
    <property type="entry name" value="PRTase-like"/>
    <property type="match status" value="1"/>
</dbReference>